<name>RS21_SULNB</name>
<evidence type="ECO:0000255" key="1">
    <source>
        <dbReference type="HAMAP-Rule" id="MF_00358"/>
    </source>
</evidence>
<evidence type="ECO:0000305" key="2"/>
<protein>
    <recommendedName>
        <fullName evidence="1">Small ribosomal subunit protein bS21</fullName>
    </recommendedName>
    <alternativeName>
        <fullName evidence="2">30S ribosomal protein S21</fullName>
    </alternativeName>
</protein>
<feature type="chain" id="PRO_1000005181" description="Small ribosomal subunit protein bS21">
    <location>
        <begin position="1"/>
        <end position="70"/>
    </location>
</feature>
<proteinExistence type="inferred from homology"/>
<reference key="1">
    <citation type="journal article" date="2007" name="Proc. Natl. Acad. Sci. U.S.A.">
        <title>Deep-sea vent epsilon-proteobacterial genomes provide insights into emergence of pathogens.</title>
        <authorList>
            <person name="Nakagawa S."/>
            <person name="Takaki Y."/>
            <person name="Shimamura S."/>
            <person name="Reysenbach A.-L."/>
            <person name="Takai K."/>
            <person name="Horikoshi K."/>
        </authorList>
    </citation>
    <scope>NUCLEOTIDE SEQUENCE [LARGE SCALE GENOMIC DNA]</scope>
    <source>
        <strain>NBC37-1</strain>
    </source>
</reference>
<keyword id="KW-0687">Ribonucleoprotein</keyword>
<keyword id="KW-0689">Ribosomal protein</keyword>
<organism>
    <name type="scientific">Sulfurovum sp. (strain NBC37-1)</name>
    <dbReference type="NCBI Taxonomy" id="387093"/>
    <lineage>
        <taxon>Bacteria</taxon>
        <taxon>Pseudomonadati</taxon>
        <taxon>Campylobacterota</taxon>
        <taxon>Epsilonproteobacteria</taxon>
        <taxon>Campylobacterales</taxon>
        <taxon>Sulfurovaceae</taxon>
        <taxon>Sulfurovum</taxon>
    </lineage>
</organism>
<sequence length="70" mass="8614">MPGIKLTPRDSFDDAYRKFKRQSDRNLIVTEARARQHYETKTEKRKKEKIATRKKILKKLFMLRRYESRL</sequence>
<dbReference type="EMBL" id="AP009179">
    <property type="protein sequence ID" value="BAF71116.1"/>
    <property type="molecule type" value="Genomic_DNA"/>
</dbReference>
<dbReference type="RefSeq" id="WP_011979849.1">
    <property type="nucleotide sequence ID" value="NC_009663.1"/>
</dbReference>
<dbReference type="SMR" id="A6Q6K7"/>
<dbReference type="STRING" id="387093.SUN_0156"/>
<dbReference type="KEGG" id="sun:SUN_0156"/>
<dbReference type="eggNOG" id="COG0828">
    <property type="taxonomic scope" value="Bacteria"/>
</dbReference>
<dbReference type="HOGENOM" id="CLU_159258_1_1_7"/>
<dbReference type="OrthoDB" id="9799244at2"/>
<dbReference type="Proteomes" id="UP000006378">
    <property type="component" value="Chromosome"/>
</dbReference>
<dbReference type="GO" id="GO:1990904">
    <property type="term" value="C:ribonucleoprotein complex"/>
    <property type="evidence" value="ECO:0007669"/>
    <property type="project" value="UniProtKB-KW"/>
</dbReference>
<dbReference type="GO" id="GO:0005840">
    <property type="term" value="C:ribosome"/>
    <property type="evidence" value="ECO:0007669"/>
    <property type="project" value="UniProtKB-KW"/>
</dbReference>
<dbReference type="GO" id="GO:0003735">
    <property type="term" value="F:structural constituent of ribosome"/>
    <property type="evidence" value="ECO:0007669"/>
    <property type="project" value="InterPro"/>
</dbReference>
<dbReference type="GO" id="GO:0006412">
    <property type="term" value="P:translation"/>
    <property type="evidence" value="ECO:0007669"/>
    <property type="project" value="UniProtKB-UniRule"/>
</dbReference>
<dbReference type="Gene3D" id="1.20.5.1150">
    <property type="entry name" value="Ribosomal protein S8"/>
    <property type="match status" value="1"/>
</dbReference>
<dbReference type="HAMAP" id="MF_00358">
    <property type="entry name" value="Ribosomal_bS21"/>
    <property type="match status" value="1"/>
</dbReference>
<dbReference type="InterPro" id="IPR001911">
    <property type="entry name" value="Ribosomal_bS21"/>
</dbReference>
<dbReference type="InterPro" id="IPR038380">
    <property type="entry name" value="Ribosomal_bS21_sf"/>
</dbReference>
<dbReference type="NCBIfam" id="TIGR00030">
    <property type="entry name" value="S21p"/>
    <property type="match status" value="1"/>
</dbReference>
<dbReference type="Pfam" id="PF01165">
    <property type="entry name" value="Ribosomal_S21"/>
    <property type="match status" value="1"/>
</dbReference>
<dbReference type="PRINTS" id="PR00976">
    <property type="entry name" value="RIBOSOMALS21"/>
</dbReference>
<comment type="similarity">
    <text evidence="1">Belongs to the bacterial ribosomal protein bS21 family.</text>
</comment>
<gene>
    <name evidence="1" type="primary">rpsU</name>
    <name type="ordered locus">SUN_0156</name>
</gene>
<accession>A6Q6K7</accession>